<keyword id="KW-0012">Acyltransferase</keyword>
<keyword id="KW-0028">Amino-acid biosynthesis</keyword>
<keyword id="KW-0496">Mitochondrion</keyword>
<keyword id="KW-1185">Reference proteome</keyword>
<keyword id="KW-0808">Transferase</keyword>
<keyword id="KW-0809">Transit peptide</keyword>
<evidence type="ECO:0000250" key="1"/>
<evidence type="ECO:0000255" key="2"/>
<evidence type="ECO:0000255" key="3">
    <source>
        <dbReference type="PROSITE-ProRule" id="PRU00532"/>
    </source>
</evidence>
<evidence type="ECO:0000256" key="4">
    <source>
        <dbReference type="SAM" id="MobiDB-lite"/>
    </source>
</evidence>
<evidence type="ECO:0000305" key="5"/>
<name>NAGS_PODAN</name>
<accession>B2B2C5</accession>
<accession>A0A090CPZ0</accession>
<comment type="function">
    <text evidence="1">N-acetylglutamate synthase involved in arginine biosynthesis.</text>
</comment>
<comment type="catalytic activity">
    <reaction>
        <text>L-glutamate + acetyl-CoA = N-acetyl-L-glutamate + CoA + H(+)</text>
        <dbReference type="Rhea" id="RHEA:24292"/>
        <dbReference type="ChEBI" id="CHEBI:15378"/>
        <dbReference type="ChEBI" id="CHEBI:29985"/>
        <dbReference type="ChEBI" id="CHEBI:44337"/>
        <dbReference type="ChEBI" id="CHEBI:57287"/>
        <dbReference type="ChEBI" id="CHEBI:57288"/>
        <dbReference type="EC" id="2.3.1.1"/>
    </reaction>
</comment>
<comment type="pathway">
    <text>Amino-acid biosynthesis; L-arginine biosynthesis; N(2)-acetyl-L-ornithine from L-glutamate: step 1/4.</text>
</comment>
<comment type="subcellular location">
    <subcellularLocation>
        <location evidence="1">Mitochondrion</location>
    </subcellularLocation>
</comment>
<comment type="similarity">
    <text evidence="5">Belongs to the acetyltransferase family.</text>
</comment>
<proteinExistence type="inferred from homology"/>
<protein>
    <recommendedName>
        <fullName>Amino-acid acetyltransferase, mitochondrial</fullName>
        <ecNumber>2.3.1.1</ecNumber>
    </recommendedName>
    <alternativeName>
        <fullName>Arginine-requiring protein 2</fullName>
    </alternativeName>
    <alternativeName>
        <fullName>Glutamate N-acetyltransferase</fullName>
    </alternativeName>
    <alternativeName>
        <fullName>N-acetylglutamate synthase</fullName>
        <shortName>AGS</shortName>
        <shortName>NAGS</shortName>
    </alternativeName>
</protein>
<reference key="1">
    <citation type="journal article" date="2008" name="Genome Biol.">
        <title>The genome sequence of the model ascomycete fungus Podospora anserina.</title>
        <authorList>
            <person name="Espagne E."/>
            <person name="Lespinet O."/>
            <person name="Malagnac F."/>
            <person name="Da Silva C."/>
            <person name="Jaillon O."/>
            <person name="Porcel B.M."/>
            <person name="Couloux A."/>
            <person name="Aury J.-M."/>
            <person name="Segurens B."/>
            <person name="Poulain J."/>
            <person name="Anthouard V."/>
            <person name="Grossetete S."/>
            <person name="Khalili H."/>
            <person name="Coppin E."/>
            <person name="Dequard-Chablat M."/>
            <person name="Picard M."/>
            <person name="Contamine V."/>
            <person name="Arnaise S."/>
            <person name="Bourdais A."/>
            <person name="Berteaux-Lecellier V."/>
            <person name="Gautheret D."/>
            <person name="de Vries R.P."/>
            <person name="Battaglia E."/>
            <person name="Coutinho P.M."/>
            <person name="Danchin E.G.J."/>
            <person name="Henrissat B."/>
            <person name="El Khoury R."/>
            <person name="Sainsard-Chanet A."/>
            <person name="Boivin A."/>
            <person name="Pinan-Lucarre B."/>
            <person name="Sellem C.H."/>
            <person name="Debuchy R."/>
            <person name="Wincker P."/>
            <person name="Weissenbach J."/>
            <person name="Silar P."/>
        </authorList>
    </citation>
    <scope>NUCLEOTIDE SEQUENCE [LARGE SCALE GENOMIC DNA]</scope>
    <source>
        <strain>S / ATCC MYA-4624 / DSM 980 / FGSC 10383</strain>
    </source>
</reference>
<reference key="2">
    <citation type="journal article" date="2014" name="Genetics">
        <title>Maintaining two mating types: Structure of the mating type locus and its role in heterokaryosis in Podospora anserina.</title>
        <authorList>
            <person name="Grognet P."/>
            <person name="Bidard F."/>
            <person name="Kuchly C."/>
            <person name="Tong L.C.H."/>
            <person name="Coppin E."/>
            <person name="Benkhali J.A."/>
            <person name="Couloux A."/>
            <person name="Wincker P."/>
            <person name="Debuchy R."/>
            <person name="Silar P."/>
        </authorList>
    </citation>
    <scope>GENOME REANNOTATION</scope>
    <source>
        <strain>S / ATCC MYA-4624 / DSM 980 / FGSC 10383</strain>
    </source>
</reference>
<dbReference type="EC" id="2.3.1.1"/>
<dbReference type="EMBL" id="CU638744">
    <property type="protein sequence ID" value="CAP71260.1"/>
    <property type="molecule type" value="Genomic_DNA"/>
</dbReference>
<dbReference type="EMBL" id="FO904941">
    <property type="protein sequence ID" value="CDP30660.1"/>
    <property type="molecule type" value="Genomic_DNA"/>
</dbReference>
<dbReference type="RefSeq" id="XP_001910126.1">
    <property type="nucleotide sequence ID" value="XM_001910091.1"/>
</dbReference>
<dbReference type="SMR" id="B2B2C5"/>
<dbReference type="FunCoup" id="B2B2C5">
    <property type="interactions" value="100"/>
</dbReference>
<dbReference type="STRING" id="515849.B2B2C5"/>
<dbReference type="GeneID" id="6194495"/>
<dbReference type="KEGG" id="pan:PODANSg7163"/>
<dbReference type="VEuPathDB" id="FungiDB:PODANS_6_3620"/>
<dbReference type="eggNOG" id="KOG2436">
    <property type="taxonomic scope" value="Eukaryota"/>
</dbReference>
<dbReference type="HOGENOM" id="CLU_013088_0_0_1"/>
<dbReference type="InParanoid" id="B2B2C5"/>
<dbReference type="OrthoDB" id="5585968at2759"/>
<dbReference type="UniPathway" id="UPA00068">
    <property type="reaction ID" value="UER00106"/>
</dbReference>
<dbReference type="Proteomes" id="UP000001197">
    <property type="component" value="Chromosome 6"/>
</dbReference>
<dbReference type="GO" id="GO:0005759">
    <property type="term" value="C:mitochondrial matrix"/>
    <property type="evidence" value="ECO:0007669"/>
    <property type="project" value="TreeGrafter"/>
</dbReference>
<dbReference type="GO" id="GO:0004042">
    <property type="term" value="F:L-glutamate N-acetyltransferase activity"/>
    <property type="evidence" value="ECO:0007669"/>
    <property type="project" value="TreeGrafter"/>
</dbReference>
<dbReference type="GO" id="GO:0006526">
    <property type="term" value="P:L-arginine biosynthetic process"/>
    <property type="evidence" value="ECO:0007669"/>
    <property type="project" value="UniProtKB-UniPathway"/>
</dbReference>
<dbReference type="GO" id="GO:0006592">
    <property type="term" value="P:ornithine biosynthetic process"/>
    <property type="evidence" value="ECO:0007669"/>
    <property type="project" value="TreeGrafter"/>
</dbReference>
<dbReference type="CDD" id="cd04266">
    <property type="entry name" value="DUF619-NAGS-FABP"/>
    <property type="match status" value="1"/>
</dbReference>
<dbReference type="FunFam" id="3.40.630.30:FF:000049">
    <property type="entry name" value="Amino-acid acetyltransferase, mitochondrial"/>
    <property type="match status" value="1"/>
</dbReference>
<dbReference type="Gene3D" id="3.40.630.30">
    <property type="match status" value="1"/>
</dbReference>
<dbReference type="InterPro" id="IPR006855">
    <property type="entry name" value="Vertebrate-like_GNAT_dom"/>
</dbReference>
<dbReference type="PANTHER" id="PTHR23342:SF4">
    <property type="entry name" value="AMINO-ACID ACETYLTRANSFERASE, MITOCHONDRIAL"/>
    <property type="match status" value="1"/>
</dbReference>
<dbReference type="PANTHER" id="PTHR23342">
    <property type="entry name" value="N-ACETYLGLUTAMATE SYNTHASE"/>
    <property type="match status" value="1"/>
</dbReference>
<dbReference type="Pfam" id="PF04768">
    <property type="entry name" value="NAT"/>
    <property type="match status" value="1"/>
</dbReference>
<dbReference type="PROSITE" id="PS51731">
    <property type="entry name" value="GNAT_NAGS"/>
    <property type="match status" value="1"/>
</dbReference>
<sequence>MPLVAAMLTRSNGAWKKATSVVQASICRDQQRPNHTTITSVTSVSQRRHFSSAENGAKPSRSHPSAAEAKQKRESDREFLISVLESSATKRDAKAYLQTYGSSKAKAVPKESPASTALVSDKAIPEAKDVSFFVQGSVPVESLEADEVPRVAIVKLREPQTWDDTLLGGVAKTLTRLRDLGLRSVIVLECSAEKSSVLDWKDVVTQQTDRLQKAIQKYGTPGAELVDGGIWKRSTTPPSASSLGHTKLSVGFGEAFTAPLRHGHILVVPSRAVVEETLEHTAADANEVIFALAKYFAGLQVNAGQNQTRTAVVDRVIIIDPFGGIPARNLGDGARVFINLEEQFNSIKATLSAAEPQDNGSPIPGISGNPKASHIENLELVKNILAILPSTASAVITSPIEAANLQSNQAYDIRRDAEEAMAGEVKTRRWQNPIIHNLLTDRPIYSASLPIGRIKSTTNGTYQRSSRMPTTTLAKKGLPVTIFPDTRTRSWQPPKPGTPRLKLTDTCVDLPRLIHLINDSFGRKLDAEHYLNRVQDSLAGIIIAGEYEGGAILTWERPFGLDEETAYNSGRLVPYLDKFAVLKKSQGAGGVADIVFNAMVRDCFPNGVCWRSRKDNPVNKWYFERSRGVRKLPGSNWAMFWTTPEAAVKDQVMEDYEDVCRGVVPSWADSKAAD</sequence>
<feature type="transit peptide" description="Mitochondrion" evidence="2">
    <location>
        <begin position="1"/>
        <end position="50"/>
    </location>
</feature>
<feature type="chain" id="PRO_0000372576" description="Amino-acid acetyltransferase, mitochondrial">
    <location>
        <begin position="51"/>
        <end position="674"/>
    </location>
</feature>
<feature type="domain" description="N-acetyltransferase" evidence="3">
    <location>
        <begin position="497"/>
        <end position="665"/>
    </location>
</feature>
<feature type="region of interest" description="Disordered" evidence="4">
    <location>
        <begin position="33"/>
        <end position="74"/>
    </location>
</feature>
<feature type="compositionally biased region" description="Polar residues" evidence="4">
    <location>
        <begin position="33"/>
        <end position="45"/>
    </location>
</feature>
<organism>
    <name type="scientific">Podospora anserina (strain S / ATCC MYA-4624 / DSM 980 / FGSC 10383)</name>
    <name type="common">Pleurage anserina</name>
    <dbReference type="NCBI Taxonomy" id="515849"/>
    <lineage>
        <taxon>Eukaryota</taxon>
        <taxon>Fungi</taxon>
        <taxon>Dikarya</taxon>
        <taxon>Ascomycota</taxon>
        <taxon>Pezizomycotina</taxon>
        <taxon>Sordariomycetes</taxon>
        <taxon>Sordariomycetidae</taxon>
        <taxon>Sordariales</taxon>
        <taxon>Podosporaceae</taxon>
        <taxon>Podospora</taxon>
        <taxon>Podospora anserina</taxon>
    </lineage>
</organism>
<gene>
    <name type="primary">ARG2</name>
    <name type="ordered locus">Pa_6_3620</name>
    <name type="ORF">PODANS_6_3620</name>
</gene>